<comment type="function">
    <text evidence="1">Contributes to virulence by binding to the host IKBKB subunit of the IKK complex and preventing host NF-kappa-B activation in response to pro-inflammatory stimuli such as TNF-alpha or IL1B. Mechanistically, sterically hinders the direct contact between the kinase domains of IKBKB in the IKK complex containing IKBKB, CHUK/IKKA and NEMO.</text>
</comment>
<comment type="subunit">
    <text evidence="1">Homodimers. Interacts with host IKBKB; this interaction inhibits host NF-kappa-B activation.</text>
</comment>
<comment type="similarity">
    <text evidence="2">Belongs to the orthopoxvirus OPG200 family.</text>
</comment>
<dbReference type="EMBL" id="MT903340">
    <property type="protein sequence ID" value="QNP13043.1"/>
    <property type="molecule type" value="Genomic_DNA"/>
</dbReference>
<dbReference type="RefSeq" id="YP_010377170.1">
    <property type="nucleotide sequence ID" value="NC_063383.1"/>
</dbReference>
<dbReference type="SMR" id="A0A7H0DNG0"/>
<dbReference type="GeneID" id="72551584"/>
<dbReference type="Proteomes" id="UP000516359">
    <property type="component" value="Genome"/>
</dbReference>
<dbReference type="GO" id="GO:0085034">
    <property type="term" value="P:symbiont-mediated suppression of host NF-kappaB cascade"/>
    <property type="evidence" value="ECO:0007669"/>
    <property type="project" value="UniProtKB-KW"/>
</dbReference>
<dbReference type="Gene3D" id="1.10.437.20">
    <property type="entry name" value="dsDNA poxvirus"/>
    <property type="match status" value="1"/>
</dbReference>
<dbReference type="InterPro" id="IPR011212">
    <property type="entry name" value="Poxvirus_B14/B22/C16"/>
</dbReference>
<dbReference type="InterPro" id="IPR022819">
    <property type="entry name" value="Poxvirus_Bcl-2-like"/>
</dbReference>
<dbReference type="InterPro" id="IPR043018">
    <property type="entry name" value="Poxvirus_sf"/>
</dbReference>
<dbReference type="Pfam" id="PF06227">
    <property type="entry name" value="Poxv_Bcl-2-like"/>
    <property type="match status" value="1"/>
</dbReference>
<dbReference type="PIRSF" id="PIRSF017324">
    <property type="entry name" value="UCP017324"/>
    <property type="match status" value="1"/>
</dbReference>
<gene>
    <name type="primary">OPG200</name>
    <name type="ORF">MPXVgp174</name>
</gene>
<organismHost>
    <name type="scientific">Cynomys gunnisoni</name>
    <name type="common">Gunnison's prairie dog</name>
    <name type="synonym">Spermophilus gunnisoni</name>
    <dbReference type="NCBI Taxonomy" id="45479"/>
</organismHost>
<organismHost>
    <name type="scientific">Cynomys leucurus</name>
    <name type="common">White-tailed prairie dog</name>
    <dbReference type="NCBI Taxonomy" id="99825"/>
</organismHost>
<organismHost>
    <name type="scientific">Cynomys ludovicianus</name>
    <name type="common">Black-tailed prairie dog</name>
    <dbReference type="NCBI Taxonomy" id="45480"/>
</organismHost>
<organismHost>
    <name type="scientific">Cynomys mexicanus</name>
    <name type="common">Mexican prairie dog</name>
    <dbReference type="NCBI Taxonomy" id="99826"/>
</organismHost>
<organismHost>
    <name type="scientific">Cynomys parvidens</name>
    <name type="common">Utah prairie dog</name>
    <dbReference type="NCBI Taxonomy" id="99827"/>
</organismHost>
<organismHost>
    <name type="scientific">Gliridae</name>
    <name type="common">dormice</name>
    <dbReference type="NCBI Taxonomy" id="30650"/>
</organismHost>
<organismHost>
    <name type="scientific">Heliosciurus ruwenzorii</name>
    <name type="common">Ruwenzori sun squirrel</name>
    <dbReference type="NCBI Taxonomy" id="226685"/>
</organismHost>
<organismHost>
    <name type="scientific">Homo sapiens</name>
    <name type="common">Human</name>
    <dbReference type="NCBI Taxonomy" id="9606"/>
</organismHost>
<organismHost>
    <name type="scientific">Mus musculus</name>
    <name type="common">Mouse</name>
    <dbReference type="NCBI Taxonomy" id="10090"/>
</organismHost>
<organism>
    <name type="scientific">Monkeypox virus</name>
    <dbReference type="NCBI Taxonomy" id="10244"/>
    <lineage>
        <taxon>Viruses</taxon>
        <taxon>Varidnaviria</taxon>
        <taxon>Bamfordvirae</taxon>
        <taxon>Nucleocytoviricota</taxon>
        <taxon>Pokkesviricetes</taxon>
        <taxon>Chitovirales</taxon>
        <taxon>Poxviridae</taxon>
        <taxon>Chordopoxvirinae</taxon>
        <taxon>Orthopoxvirus</taxon>
    </lineage>
</organism>
<evidence type="ECO:0000250" key="1">
    <source>
        <dbReference type="UniProtKB" id="P24772"/>
    </source>
</evidence>
<evidence type="ECO:0000305" key="2"/>
<feature type="chain" id="PRO_0000457602" description="Protein OPG200">
    <location>
        <begin position="1"/>
        <end position="149"/>
    </location>
</feature>
<protein>
    <recommendedName>
        <fullName>Protein OPG200</fullName>
    </recommendedName>
</protein>
<proteinExistence type="inferred from homology"/>
<keyword id="KW-0244">Early protein</keyword>
<keyword id="KW-0945">Host-virus interaction</keyword>
<keyword id="KW-1100">Inhibition of host NF-kappa-B by virus</keyword>
<keyword id="KW-1185">Reference proteome</keyword>
<name>PG200_MONPV</name>
<accession>A0A7H0DNG0</accession>
<reference key="1">
    <citation type="journal article" date="2022" name="J. Infect. Dis.">
        <title>Exportation of Monkeypox virus from the African continent.</title>
        <authorList>
            <person name="Mauldin M.R."/>
            <person name="McCollum A.M."/>
            <person name="Nakazawa Y.J."/>
            <person name="Mandra A."/>
            <person name="Whitehouse E.R."/>
            <person name="Davidson W."/>
            <person name="Zhao H."/>
            <person name="Gao J."/>
            <person name="Li Y."/>
            <person name="Doty J."/>
            <person name="Yinka-Ogunleye A."/>
            <person name="Akinpelu A."/>
            <person name="Aruna O."/>
            <person name="Naidoo D."/>
            <person name="Lewandowski K."/>
            <person name="Afrough B."/>
            <person name="Graham V."/>
            <person name="Aarons E."/>
            <person name="Hewson R."/>
            <person name="Vipond R."/>
            <person name="Dunning J."/>
            <person name="Chand M."/>
            <person name="Brown C."/>
            <person name="Cohen-Gihon I."/>
            <person name="Erez N."/>
            <person name="Shifman O."/>
            <person name="Israeli O."/>
            <person name="Sharon M."/>
            <person name="Schwartz E."/>
            <person name="Beth-Din A."/>
            <person name="Zvi A."/>
            <person name="Mak T.M."/>
            <person name="Ng Y.K."/>
            <person name="Cui L."/>
            <person name="Lin R.T.P."/>
            <person name="Olson V.A."/>
            <person name="Brooks T."/>
            <person name="Paran N."/>
            <person name="Ihekweazu C."/>
            <person name="Reynolds M.G."/>
        </authorList>
    </citation>
    <scope>NUCLEOTIDE SEQUENCE [LARGE SCALE GENOMIC DNA]</scope>
    <source>
        <strain>MPXV-M5312_HM12_Rivers</strain>
    </source>
</reference>
<sequence>MTANFSTHVFSPQHCGCDRLTSIDDVRQCLTEYIYWSSYAYRNRQCAGQLYDTLLSFKDDAESVFIDVRELVKNMPWDNVKDCTEIIRCYIPDEQKTIREISAIIGLCAYAATYWGGEDHPTSNSLNALFVMLEMLNYMDYTIIFWRMN</sequence>